<organism>
    <name type="scientific">Ophiophagus hannah</name>
    <name type="common">King cobra</name>
    <name type="synonym">Naja hannah</name>
    <dbReference type="NCBI Taxonomy" id="8665"/>
    <lineage>
        <taxon>Eukaryota</taxon>
        <taxon>Metazoa</taxon>
        <taxon>Chordata</taxon>
        <taxon>Craniata</taxon>
        <taxon>Vertebrata</taxon>
        <taxon>Euteleostomi</taxon>
        <taxon>Lepidosauria</taxon>
        <taxon>Squamata</taxon>
        <taxon>Bifurcata</taxon>
        <taxon>Unidentata</taxon>
        <taxon>Episquamata</taxon>
        <taxon>Toxicofera</taxon>
        <taxon>Serpentes</taxon>
        <taxon>Colubroidea</taxon>
        <taxon>Elapidae</taxon>
        <taxon>Elapinae</taxon>
        <taxon>Ophiophagus</taxon>
    </lineage>
</organism>
<keyword id="KW-0008">Acetylcholine receptor inhibiting toxin</keyword>
<keyword id="KW-1015">Disulfide bond</keyword>
<keyword id="KW-0872">Ion channel impairing toxin</keyword>
<keyword id="KW-0528">Neurotoxin</keyword>
<keyword id="KW-0629">Postsynaptic neurotoxin</keyword>
<keyword id="KW-0964">Secreted</keyword>
<keyword id="KW-0732">Signal</keyword>
<keyword id="KW-0800">Toxin</keyword>
<evidence type="ECO:0000250" key="1"/>
<evidence type="ECO:0000250" key="2">
    <source>
        <dbReference type="UniProtKB" id="P60615"/>
    </source>
</evidence>
<evidence type="ECO:0000269" key="3">
    <source>
    </source>
</evidence>
<evidence type="ECO:0000305" key="4"/>
<protein>
    <recommendedName>
        <fullName>Long neurotoxin OH-56</fullName>
    </recommendedName>
</protein>
<sequence>MKTLLLTLVVVTIMCLDLGYTTKCYVTPDVTSQTCPDGQNICYTETWCDAWCGSRGKRVNLGCAATCPKVNPGVDIICCSTDNCNPFPKRS</sequence>
<dbReference type="EMBL" id="AY596929">
    <property type="protein sequence ID" value="AAT97251.1"/>
    <property type="molecule type" value="mRNA"/>
</dbReference>
<dbReference type="SMR" id="Q53B57"/>
<dbReference type="GO" id="GO:0005576">
    <property type="term" value="C:extracellular region"/>
    <property type="evidence" value="ECO:0007669"/>
    <property type="project" value="UniProtKB-SubCell"/>
</dbReference>
<dbReference type="GO" id="GO:0030550">
    <property type="term" value="F:acetylcholine receptor inhibitor activity"/>
    <property type="evidence" value="ECO:0007669"/>
    <property type="project" value="UniProtKB-KW"/>
</dbReference>
<dbReference type="GO" id="GO:0099106">
    <property type="term" value="F:ion channel regulator activity"/>
    <property type="evidence" value="ECO:0007669"/>
    <property type="project" value="UniProtKB-KW"/>
</dbReference>
<dbReference type="GO" id="GO:0090729">
    <property type="term" value="F:toxin activity"/>
    <property type="evidence" value="ECO:0007669"/>
    <property type="project" value="UniProtKB-KW"/>
</dbReference>
<dbReference type="CDD" id="cd00206">
    <property type="entry name" value="TFP_snake_toxin"/>
    <property type="match status" value="1"/>
</dbReference>
<dbReference type="Gene3D" id="2.10.60.10">
    <property type="entry name" value="CD59"/>
    <property type="match status" value="1"/>
</dbReference>
<dbReference type="InterPro" id="IPR003571">
    <property type="entry name" value="Snake_3FTx"/>
</dbReference>
<dbReference type="InterPro" id="IPR045860">
    <property type="entry name" value="Snake_toxin-like_sf"/>
</dbReference>
<dbReference type="InterPro" id="IPR018354">
    <property type="entry name" value="Snake_toxin_con_site"/>
</dbReference>
<dbReference type="InterPro" id="IPR054131">
    <property type="entry name" value="Toxin_cobra-type"/>
</dbReference>
<dbReference type="Pfam" id="PF21947">
    <property type="entry name" value="Toxin_cobra-type"/>
    <property type="match status" value="1"/>
</dbReference>
<dbReference type="SUPFAM" id="SSF57302">
    <property type="entry name" value="Snake toxin-like"/>
    <property type="match status" value="1"/>
</dbReference>
<dbReference type="PROSITE" id="PS00272">
    <property type="entry name" value="SNAKE_TOXIN"/>
    <property type="match status" value="1"/>
</dbReference>
<feature type="signal peptide" evidence="1">
    <location>
        <begin position="1"/>
        <end position="21"/>
    </location>
</feature>
<feature type="chain" id="PRO_5000093322" description="Long neurotoxin OH-56">
    <location>
        <begin position="22"/>
        <end position="91"/>
    </location>
</feature>
<feature type="disulfide bond" evidence="1">
    <location>
        <begin position="24"/>
        <end position="42"/>
    </location>
</feature>
<feature type="disulfide bond" evidence="1">
    <location>
        <begin position="35"/>
        <end position="63"/>
    </location>
</feature>
<feature type="disulfide bond" evidence="1">
    <location>
        <begin position="48"/>
        <end position="52"/>
    </location>
</feature>
<feature type="disulfide bond" evidence="1">
    <location>
        <begin position="67"/>
        <end position="78"/>
    </location>
</feature>
<feature type="disulfide bond" evidence="1">
    <location>
        <begin position="79"/>
        <end position="84"/>
    </location>
</feature>
<reference key="1">
    <citation type="journal article" date="2004" name="Toxicon">
        <title>Cloning and purification of alpha-neurotoxins from king cobra (Ophiophagus hannah).</title>
        <authorList>
            <person name="He Y.-Y."/>
            <person name="Lee W.-H."/>
            <person name="Zhang Y."/>
        </authorList>
    </citation>
    <scope>NUCLEOTIDE SEQUENCE [MRNA]</scope>
    <source>
        <tissue>Venom gland</tissue>
    </source>
</reference>
<reference key="2">
    <citation type="journal article" date="2013" name="Proc. Natl. Acad. Sci. U.S.A.">
        <title>The king cobra genome reveals dynamic gene evolution and adaptation in the snake venom system.</title>
        <authorList>
            <person name="Vonk F.J."/>
            <person name="Casewell N.R."/>
            <person name="Henkel C.V."/>
            <person name="Heimberg A.M."/>
            <person name="Jansen H.J."/>
            <person name="McCleary R.J."/>
            <person name="Kerkkamp H.M."/>
            <person name="Vos R.A."/>
            <person name="Guerreiro I."/>
            <person name="Calvete J.J."/>
            <person name="Wuster W."/>
            <person name="Woods A.E."/>
            <person name="Logan J.M."/>
            <person name="Harrison R.A."/>
            <person name="Castoe T.A."/>
            <person name="de Koning A.P."/>
            <person name="Pollock D.D."/>
            <person name="Yandell M."/>
            <person name="Calderon D."/>
            <person name="Renjifo C."/>
            <person name="Currier R.B."/>
            <person name="Salgado D."/>
            <person name="Pla D."/>
            <person name="Sanz L."/>
            <person name="Hyder A.S."/>
            <person name="Ribeiro J.M."/>
            <person name="Arntzen J.W."/>
            <person name="van den Thillart G.E."/>
            <person name="Boetzer M."/>
            <person name="Pirovano W."/>
            <person name="Dirks R.P."/>
            <person name="Spaink H.P."/>
            <person name="Duboule D."/>
            <person name="McGlinn E."/>
            <person name="Kini R.M."/>
            <person name="Richardson M.K."/>
        </authorList>
    </citation>
    <scope>IDENTIFICATION BY MASS SPECTROMETRY</scope>
    <scope>SUBCELLULAR LOCATION</scope>
    <source>
        <tissue>Venom</tissue>
    </source>
</reference>
<name>3L256_OPHHA</name>
<accession>Q53B57</accession>
<proteinExistence type="evidence at protein level"/>
<comment type="function">
    <text evidence="2">Binds with high affinity to muscular (alpha-1/CHRNA1) and neuronal (alpha-7/CHRNA7) nicotinic acetylcholine receptor (nAChR) and inhibits acetylcholine from binding to the receptor, thereby impairing neuromuscular and neuronal transmission.</text>
</comment>
<comment type="subcellular location">
    <subcellularLocation>
        <location evidence="3">Secreted</location>
    </subcellularLocation>
</comment>
<comment type="tissue specificity">
    <text evidence="4">Expressed by the venom gland.</text>
</comment>
<comment type="similarity">
    <text evidence="4">Belongs to the three-finger toxin family. Long-chain subfamily. Type II alpha-neurotoxin sub-subfamily.</text>
</comment>